<dbReference type="EMBL" id="AY118171">
    <property type="protein sequence ID" value="AAM81579.1"/>
    <property type="molecule type" value="mRNA"/>
</dbReference>
<dbReference type="EMBL" id="AC091276">
    <property type="status" value="NOT_ANNOTATED_CDS"/>
    <property type="molecule type" value="Genomic_DNA"/>
</dbReference>
<dbReference type="EMBL" id="AC102633">
    <property type="status" value="NOT_ANNOTATED_CDS"/>
    <property type="molecule type" value="Genomic_DNA"/>
</dbReference>
<dbReference type="EMBL" id="AC110897">
    <property type="status" value="NOT_ANNOTATED_CDS"/>
    <property type="molecule type" value="Genomic_DNA"/>
</dbReference>
<dbReference type="EMBL" id="AC125054">
    <property type="status" value="NOT_ANNOTATED_CDS"/>
    <property type="molecule type" value="Genomic_DNA"/>
</dbReference>
<dbReference type="CCDS" id="CCDS49619.1"/>
<dbReference type="RefSeq" id="NP_690887.2">
    <property type="nucleotide sequence ID" value="NM_152923.3"/>
</dbReference>
<dbReference type="SMR" id="Q8K3F6"/>
<dbReference type="BioGRID" id="225968">
    <property type="interactions" value="12"/>
</dbReference>
<dbReference type="FunCoup" id="Q8K3F6">
    <property type="interactions" value="183"/>
</dbReference>
<dbReference type="IntAct" id="Q8K3F6">
    <property type="interactions" value="1"/>
</dbReference>
<dbReference type="STRING" id="10090.ENSMUSP00000063380"/>
<dbReference type="GlyGen" id="Q8K3F6">
    <property type="glycosylation" value="2 sites, 1 O-linked glycan (2 sites)"/>
</dbReference>
<dbReference type="iPTMnet" id="Q8K3F6"/>
<dbReference type="PhosphoSitePlus" id="Q8K3F6"/>
<dbReference type="SwissPalm" id="Q8K3F6"/>
<dbReference type="PaxDb" id="10090-ENSMUSP00000063380"/>
<dbReference type="ProteomicsDB" id="263417"/>
<dbReference type="Antibodypedia" id="14124">
    <property type="antibodies" value="151 antibodies from 24 providers"/>
</dbReference>
<dbReference type="DNASU" id="110862"/>
<dbReference type="Ensembl" id="ENSMUST00000070256.9">
    <property type="protein sequence ID" value="ENSMUSP00000063380.7"/>
    <property type="gene ID" value="ENSMUSG00000056258.10"/>
</dbReference>
<dbReference type="GeneID" id="110862"/>
<dbReference type="KEGG" id="mmu:110862"/>
<dbReference type="UCSC" id="uc007wab.2">
    <property type="organism name" value="mouse"/>
</dbReference>
<dbReference type="AGR" id="MGI:1336181"/>
<dbReference type="CTD" id="3786"/>
<dbReference type="MGI" id="MGI:1336181">
    <property type="gene designation" value="Kcnq3"/>
</dbReference>
<dbReference type="VEuPathDB" id="HostDB:ENSMUSG00000056258"/>
<dbReference type="eggNOG" id="KOG1419">
    <property type="taxonomic scope" value="Eukaryota"/>
</dbReference>
<dbReference type="GeneTree" id="ENSGT00940000159760"/>
<dbReference type="HOGENOM" id="CLU_011722_8_2_1"/>
<dbReference type="InParanoid" id="Q8K3F6"/>
<dbReference type="OMA" id="QDRDDYM"/>
<dbReference type="OrthoDB" id="8879391at2759"/>
<dbReference type="PhylomeDB" id="Q8K3F6"/>
<dbReference type="TreeFam" id="TF315186"/>
<dbReference type="BioGRID-ORCS" id="110862">
    <property type="hits" value="3 hits in 78 CRISPR screens"/>
</dbReference>
<dbReference type="ChiTaRS" id="Kcnq3">
    <property type="organism name" value="mouse"/>
</dbReference>
<dbReference type="PRO" id="PR:Q8K3F6"/>
<dbReference type="Proteomes" id="UP000000589">
    <property type="component" value="Chromosome 15"/>
</dbReference>
<dbReference type="RNAct" id="Q8K3F6">
    <property type="molecule type" value="protein"/>
</dbReference>
<dbReference type="Bgee" id="ENSMUSG00000056258">
    <property type="expression patterns" value="Expressed in medial geniculate body and 120 other cell types or tissues"/>
</dbReference>
<dbReference type="GO" id="GO:0043194">
    <property type="term" value="C:axon initial segment"/>
    <property type="evidence" value="ECO:0000314"/>
    <property type="project" value="BHF-UCL"/>
</dbReference>
<dbReference type="GO" id="GO:0009986">
    <property type="term" value="C:cell surface"/>
    <property type="evidence" value="ECO:0000314"/>
    <property type="project" value="MGI"/>
</dbReference>
<dbReference type="GO" id="GO:0005739">
    <property type="term" value="C:mitochondrion"/>
    <property type="evidence" value="ECO:0007669"/>
    <property type="project" value="GOC"/>
</dbReference>
<dbReference type="GO" id="GO:0033268">
    <property type="term" value="C:node of Ranvier"/>
    <property type="evidence" value="ECO:0000314"/>
    <property type="project" value="BHF-UCL"/>
</dbReference>
<dbReference type="GO" id="GO:0005886">
    <property type="term" value="C:plasma membrane"/>
    <property type="evidence" value="ECO:0000314"/>
    <property type="project" value="BHF-UCL"/>
</dbReference>
<dbReference type="GO" id="GO:0045202">
    <property type="term" value="C:synapse"/>
    <property type="evidence" value="ECO:0007669"/>
    <property type="project" value="GOC"/>
</dbReference>
<dbReference type="GO" id="GO:0008076">
    <property type="term" value="C:voltage-gated potassium channel complex"/>
    <property type="evidence" value="ECO:0000316"/>
    <property type="project" value="MGI"/>
</dbReference>
<dbReference type="GO" id="GO:0005516">
    <property type="term" value="F:calmodulin binding"/>
    <property type="evidence" value="ECO:0000315"/>
    <property type="project" value="MGI"/>
</dbReference>
<dbReference type="GO" id="GO:0005267">
    <property type="term" value="F:potassium channel activity"/>
    <property type="evidence" value="ECO:0000315"/>
    <property type="project" value="MGI"/>
</dbReference>
<dbReference type="GO" id="GO:0022843">
    <property type="term" value="F:voltage-gated monoatomic cation channel activity"/>
    <property type="evidence" value="ECO:0000250"/>
    <property type="project" value="UniProtKB"/>
</dbReference>
<dbReference type="GO" id="GO:0005244">
    <property type="term" value="F:voltage-gated monoatomic ion channel activity"/>
    <property type="evidence" value="ECO:0000316"/>
    <property type="project" value="MGI"/>
</dbReference>
<dbReference type="GO" id="GO:0005249">
    <property type="term" value="F:voltage-gated potassium channel activity"/>
    <property type="evidence" value="ECO:0000250"/>
    <property type="project" value="UniProtKB"/>
</dbReference>
<dbReference type="GO" id="GO:0099610">
    <property type="term" value="P:action potential initiation"/>
    <property type="evidence" value="ECO:0000314"/>
    <property type="project" value="MGI"/>
</dbReference>
<dbReference type="GO" id="GO:0097314">
    <property type="term" value="P:apoptosome assembly"/>
    <property type="evidence" value="ECO:0000315"/>
    <property type="project" value="MGI"/>
</dbReference>
<dbReference type="GO" id="GO:0071277">
    <property type="term" value="P:cellular response to calcium ion"/>
    <property type="evidence" value="ECO:0000314"/>
    <property type="project" value="MGI"/>
</dbReference>
<dbReference type="GO" id="GO:0071466">
    <property type="term" value="P:cellular response to xenobiotic stimulus"/>
    <property type="evidence" value="ECO:0000314"/>
    <property type="project" value="MGI"/>
</dbReference>
<dbReference type="GO" id="GO:0006897">
    <property type="term" value="P:endocytosis"/>
    <property type="evidence" value="ECO:0000315"/>
    <property type="project" value="MGI"/>
</dbReference>
<dbReference type="GO" id="GO:0051649">
    <property type="term" value="P:establishment of localization in cell"/>
    <property type="evidence" value="ECO:0000315"/>
    <property type="project" value="MGI"/>
</dbReference>
<dbReference type="GO" id="GO:0098976">
    <property type="term" value="P:excitatory chemical synaptic transmission"/>
    <property type="evidence" value="ECO:0000316"/>
    <property type="project" value="MGI"/>
</dbReference>
<dbReference type="GO" id="GO:0006887">
    <property type="term" value="P:exocytosis"/>
    <property type="evidence" value="ECO:0000315"/>
    <property type="project" value="MGI"/>
</dbReference>
<dbReference type="GO" id="GO:0010467">
    <property type="term" value="P:gene expression"/>
    <property type="evidence" value="ECO:0000315"/>
    <property type="project" value="MGI"/>
</dbReference>
<dbReference type="GO" id="GO:0098977">
    <property type="term" value="P:inhibitory chemical synaptic transmission"/>
    <property type="evidence" value="ECO:0000316"/>
    <property type="project" value="MGI"/>
</dbReference>
<dbReference type="GO" id="GO:0060081">
    <property type="term" value="P:membrane hyperpolarization"/>
    <property type="evidence" value="ECO:0000315"/>
    <property type="project" value="MGI"/>
</dbReference>
<dbReference type="GO" id="GO:0051882">
    <property type="term" value="P:mitochondrial depolarization"/>
    <property type="evidence" value="ECO:0000315"/>
    <property type="project" value="MGI"/>
</dbReference>
<dbReference type="GO" id="GO:0034220">
    <property type="term" value="P:monoatomic ion transmembrane transport"/>
    <property type="evidence" value="ECO:0000315"/>
    <property type="project" value="MGI"/>
</dbReference>
<dbReference type="GO" id="GO:0021675">
    <property type="term" value="P:nerve development"/>
    <property type="evidence" value="ECO:0000315"/>
    <property type="project" value="MGI"/>
</dbReference>
<dbReference type="GO" id="GO:0051402">
    <property type="term" value="P:neuron apoptotic process"/>
    <property type="evidence" value="ECO:0000315"/>
    <property type="project" value="MGI"/>
</dbReference>
<dbReference type="GO" id="GO:0030182">
    <property type="term" value="P:neuron differentiation"/>
    <property type="evidence" value="ECO:0000315"/>
    <property type="project" value="MGI"/>
</dbReference>
<dbReference type="GO" id="GO:0016322">
    <property type="term" value="P:neuron remodeling"/>
    <property type="evidence" value="ECO:0000316"/>
    <property type="project" value="MGI"/>
</dbReference>
<dbReference type="GO" id="GO:0019228">
    <property type="term" value="P:neuronal action potential"/>
    <property type="evidence" value="ECO:0000315"/>
    <property type="project" value="MGI"/>
</dbReference>
<dbReference type="GO" id="GO:0071805">
    <property type="term" value="P:potassium ion transmembrane transport"/>
    <property type="evidence" value="ECO:0000315"/>
    <property type="project" value="MGI"/>
</dbReference>
<dbReference type="GO" id="GO:0006606">
    <property type="term" value="P:protein import into nucleus"/>
    <property type="evidence" value="ECO:0000315"/>
    <property type="project" value="MGI"/>
</dbReference>
<dbReference type="GO" id="GO:0006605">
    <property type="term" value="P:protein targeting"/>
    <property type="evidence" value="ECO:0000315"/>
    <property type="project" value="MGI"/>
</dbReference>
<dbReference type="GO" id="GO:0015031">
    <property type="term" value="P:protein transport"/>
    <property type="evidence" value="ECO:0000315"/>
    <property type="project" value="MGI"/>
</dbReference>
<dbReference type="GO" id="GO:0065003">
    <property type="term" value="P:protein-containing complex assembly"/>
    <property type="evidence" value="ECO:0000315"/>
    <property type="project" value="MGI"/>
</dbReference>
<dbReference type="GO" id="GO:0036343">
    <property type="term" value="P:psychomotor behavior"/>
    <property type="evidence" value="ECO:0000315"/>
    <property type="project" value="MGI"/>
</dbReference>
<dbReference type="GO" id="GO:0099611">
    <property type="term" value="P:regulation of action potential firing threshold"/>
    <property type="evidence" value="ECO:0000316"/>
    <property type="project" value="MGI"/>
</dbReference>
<dbReference type="GO" id="GO:0048167">
    <property type="term" value="P:regulation of synaptic plasticity"/>
    <property type="evidence" value="ECO:0000315"/>
    <property type="project" value="MGI"/>
</dbReference>
<dbReference type="GO" id="GO:0010996">
    <property type="term" value="P:response to auditory stimulus"/>
    <property type="evidence" value="ECO:0000314"/>
    <property type="project" value="MGI"/>
</dbReference>
<dbReference type="GO" id="GO:0009612">
    <property type="term" value="P:response to mechanical stimulus"/>
    <property type="evidence" value="ECO:0000315"/>
    <property type="project" value="MGI"/>
</dbReference>
<dbReference type="GO" id="GO:0007605">
    <property type="term" value="P:sensory perception of sound"/>
    <property type="evidence" value="ECO:0000316"/>
    <property type="project" value="MGI"/>
</dbReference>
<dbReference type="GO" id="GO:1903701">
    <property type="term" value="P:substantia propria of cornea development"/>
    <property type="evidence" value="ECO:0000315"/>
    <property type="project" value="MGI"/>
</dbReference>
<dbReference type="FunFam" id="1.20.120.350:FF:000017">
    <property type="entry name" value="potassium voltage-gated channel subfamily KQT member 1"/>
    <property type="match status" value="1"/>
</dbReference>
<dbReference type="FunFam" id="1.10.287.70:FF:000016">
    <property type="entry name" value="Putative potassium voltage-gated channel subfamily KQT member 2"/>
    <property type="match status" value="1"/>
</dbReference>
<dbReference type="Gene3D" id="1.10.287.70">
    <property type="match status" value="1"/>
</dbReference>
<dbReference type="Gene3D" id="6.10.140.1910">
    <property type="match status" value="2"/>
</dbReference>
<dbReference type="InterPro" id="IPR020969">
    <property type="entry name" value="Ankyrin-G_BS"/>
</dbReference>
<dbReference type="InterPro" id="IPR005821">
    <property type="entry name" value="Ion_trans_dom"/>
</dbReference>
<dbReference type="InterPro" id="IPR003937">
    <property type="entry name" value="K_chnl_volt-dep_KCNQ"/>
</dbReference>
<dbReference type="InterPro" id="IPR003948">
    <property type="entry name" value="K_chnl_volt-dep_KCNQ3"/>
</dbReference>
<dbReference type="InterPro" id="IPR013821">
    <property type="entry name" value="K_chnl_volt-dep_KCNQ_C"/>
</dbReference>
<dbReference type="PANTHER" id="PTHR47735:SF11">
    <property type="entry name" value="POTASSIUM VOLTAGE-GATED CHANNEL SUBFAMILY KQT MEMBER 3"/>
    <property type="match status" value="1"/>
</dbReference>
<dbReference type="PANTHER" id="PTHR47735">
    <property type="entry name" value="POTASSIUM VOLTAGE-GATED CHANNEL SUBFAMILY KQT MEMBER 4"/>
    <property type="match status" value="1"/>
</dbReference>
<dbReference type="Pfam" id="PF00520">
    <property type="entry name" value="Ion_trans"/>
    <property type="match status" value="1"/>
</dbReference>
<dbReference type="Pfam" id="PF03520">
    <property type="entry name" value="KCNQ_channel"/>
    <property type="match status" value="1"/>
</dbReference>
<dbReference type="Pfam" id="PF11956">
    <property type="entry name" value="KCNQC3-Ank-G_bd"/>
    <property type="match status" value="1"/>
</dbReference>
<dbReference type="PRINTS" id="PR00169">
    <property type="entry name" value="KCHANNEL"/>
</dbReference>
<dbReference type="PRINTS" id="PR01462">
    <property type="entry name" value="KCNQ3CHANNEL"/>
</dbReference>
<dbReference type="PRINTS" id="PR01459">
    <property type="entry name" value="KCNQCHANNEL"/>
</dbReference>
<dbReference type="SUPFAM" id="SSF81324">
    <property type="entry name" value="Voltage-gated potassium channels"/>
    <property type="match status" value="1"/>
</dbReference>
<protein>
    <recommendedName>
        <fullName evidence="9">Potassium voltage-gated channel subfamily KQT member 3</fullName>
    </recommendedName>
    <alternativeName>
        <fullName>KQT-like 3</fullName>
    </alternativeName>
    <alternativeName>
        <fullName>Potassium channel subunit alpha KvLQT3</fullName>
    </alternativeName>
    <alternativeName>
        <fullName>Voltage-gated potassium channel subunit Kv7.3</fullName>
    </alternativeName>
</protein>
<comment type="function">
    <text evidence="2 3">Pore-forming subunit of the voltage-gated potassium (Kv) M-channel which is responsible for the M-current, a key controller of neuronal excitability. M-channel is composed of pore-forming subunits KCNQ2 and KCNQ3 assembled as heterotetramers (By similarity). The native M-current has a slowly activating and deactivating potassium conductance which plays a critical role in determining the subthreshold electrical excitability of neurons as well as the responsiveness to synaptic inputs. M-channel is selectively permeable in vitro to other cations besides potassium, in decreasing order of affinity K(+) &gt; Rb(+) &gt; Cs(+) &gt; Na(+). M-channel association with SLC5A3/SMIT1 alters channel ion selectivity, increasing Na(+) and Cs(+) permeation relative to K(+). Suppressed by activation of M1 muscarinic acetylcholine receptors. KCNQ3 also associates with KCNQ5 to form a functional channel in vitro and may also contribute to the M-current in brain (By similarity).</text>
</comment>
<comment type="catalytic activity">
    <reaction evidence="2">
        <text>K(+)(in) = K(+)(out)</text>
        <dbReference type="Rhea" id="RHEA:29463"/>
        <dbReference type="ChEBI" id="CHEBI:29103"/>
    </reaction>
</comment>
<comment type="catalytic activity">
    <reaction evidence="2">
        <text>Rb(+)(in) = Rb(+)(out)</text>
        <dbReference type="Rhea" id="RHEA:78547"/>
        <dbReference type="ChEBI" id="CHEBI:49847"/>
    </reaction>
</comment>
<comment type="catalytic activity">
    <reaction evidence="2">
        <text>Cs(+)(in) = Cs(+)(out)</text>
        <dbReference type="Rhea" id="RHEA:78555"/>
        <dbReference type="ChEBI" id="CHEBI:49547"/>
    </reaction>
</comment>
<comment type="catalytic activity">
    <reaction evidence="2">
        <text>Na(+)(in) = Na(+)(out)</text>
        <dbReference type="Rhea" id="RHEA:34963"/>
        <dbReference type="ChEBI" id="CHEBI:29101"/>
    </reaction>
</comment>
<comment type="activity regulation">
    <text evidence="3 4">Phosphatidylinositol-4,5-bisphosphate (PIP2) potentiates the activation of KCNQ channels by enhancing the electro-mechanical coupling of the voltage-sensing domain (VSD) and the pore-forming domain (PD). In the closed state of the channel, PIP2 is anchored at the S2-S3 loop; upon channel activation, PIP2 interacts with the S4-S5 linker and is involved in channel gating (By similarity). Calcium suppresses KCNQ2-KCNQ3 channel currents, with calcium-bound calmodulin inducing a change in channel configuration which leads to the reduction of channel affinity for PIP2 and subsequent current suppression (By similarity).</text>
</comment>
<comment type="subunit">
    <text evidence="2 7">Heterotetramer with KCNQ2; forms heterotetrameric native M-channel responsible for the M-current. Interacts with calmodulin; the interaction is calcium-independent, constitutive and participates in the proper assembly of a functional M-channel. Heteromultimer with KCNQ5. May associate with KCNE2 (By similarity). Interacts with IQCJ-SCHIP1 (PubMed:27979964). Interacts (via the pore module) with SLC5A3/SMIT1; forms a coregulatory complex that alters ion selectivity, voltage dependence and gating kinetics of the channel (By similarity).</text>
</comment>
<comment type="subcellular location">
    <subcellularLocation>
        <location evidence="2">Cell membrane</location>
        <topology evidence="5">Multi-pass membrane protein</topology>
    </subcellularLocation>
</comment>
<comment type="tissue specificity">
    <text evidence="8">Expressed in dorsal root ganglion (DRG) neurons.</text>
</comment>
<comment type="domain">
    <text evidence="3">Each subunit contains six transmembrane segments (S1-S6) with S1-S4 forming one voltage sensing domain (VSD) and S5-S6 contributing to form one quarter of an interlocking pore-forming domain (PD).</text>
</comment>
<comment type="domain">
    <text evidence="3">The S4-S5 linker preferentially interacts with PIP2 in the open-state KCNQ2 channel, whereas the S2-S3 loop interacts with PIP2 in the closed state.</text>
</comment>
<comment type="domain">
    <text evidence="2">The intracellular C-terminal domain is bound constitutively by calmodulin (CaM). This domain plays key functions in channel tetramerization, trafficking, and gating.</text>
</comment>
<comment type="PTM">
    <text evidence="2">KCNQ2/KCNQ3 are ubiquitinated by NEDD4L. Ubiquitination leads to protein degradation. Degradation induced by NEDD4L is inhibited by USP36.</text>
</comment>
<comment type="similarity">
    <text evidence="9">Belongs to the potassium channel family. KQT (TC 1.A.1.15) subfamily. Kv7.3/KCNQ3 sub-subfamily.</text>
</comment>
<organism>
    <name type="scientific">Mus musculus</name>
    <name type="common">Mouse</name>
    <dbReference type="NCBI Taxonomy" id="10090"/>
    <lineage>
        <taxon>Eukaryota</taxon>
        <taxon>Metazoa</taxon>
        <taxon>Chordata</taxon>
        <taxon>Craniata</taxon>
        <taxon>Vertebrata</taxon>
        <taxon>Euteleostomi</taxon>
        <taxon>Mammalia</taxon>
        <taxon>Eutheria</taxon>
        <taxon>Euarchontoglires</taxon>
        <taxon>Glires</taxon>
        <taxon>Rodentia</taxon>
        <taxon>Myomorpha</taxon>
        <taxon>Muroidea</taxon>
        <taxon>Muridae</taxon>
        <taxon>Murinae</taxon>
        <taxon>Mus</taxon>
        <taxon>Mus</taxon>
    </lineage>
</organism>
<gene>
    <name evidence="10" type="primary">Kcnq3</name>
</gene>
<name>KCNQ3_MOUSE</name>
<proteinExistence type="evidence at protein level"/>
<sequence>MGLKARRAAGAAGGGGGEGGGGGGGAANPAGGDSAVAGDEERKVGLAPGDVEQVTLALGAGADKDGTLLLEGGGREEGQRRTPQGIGLLAKTPLSRPVKRNNAKYRRIQTLIYDALERPRGWALLYHALVFLIVLGCLILAVLTTFKEYETVSGDWLLLLETFAIFIFGAEFALRIWAAGCCCRYKGWRGRLKFARKPLCMLDIFVLIASVPVVAVGNQGNVLATSLRSLRFLQILRMLRMDRRGGTWKLLGSAICAHSKELITAWYIGFLTLILSSFLVYLVEKDVPEMDAQGEEMKEEFETYADALWWGLITLATIGYGDKTPKTWEGRLIAATFSLIGVSFFALPAGILGSGLALKVQEQHRQKHFEKRRKPAAELIQAAWRYYATNPNRLDLVATWRFYESVVSFPFFRKEQLEAAASQKLGLLDRVRLSNPRGSNTKGKLFTPLNVDAIEESPSKEPKPVGLNNKERFRTAFRMKAYAFWQSSEDAGTGDPMAEDRGYGNDFLIEDMIPTLKAAIRAVRILQFRLYKKKFKETLRPYDVKDVIEQYSAGHLDMLSRIKYLQTRIDMIFTPGPPSTPKHKKSQKGSAFTYPSQQSPRNEPYVARAATSETEDQSMMGKFVKVERQVHDMGKKLDFLVDMHMQHMERLQVHVTEYYPTKGASSPAEGEKKEDNRYSDLKTIICNYSETGPPDPPYSFHQVPIDRVGPYGFFAHDPVKLTRGGPSSTKAQANLPSSGSTYAERPTVLPILTLLDSCVSYHSQTELQGPYSDHISPRQRRSITRDSDTPLSLMSVNHEELERSPSGFSISQDRDDYVFGPSGGSSWMREKRYLAEGETDTDTDPFTPSGSMPMSSTGDGISDSIWTPSNKPT</sequence>
<feature type="chain" id="PRO_0000054035" description="Potassium voltage-gated channel subfamily KQT member 3">
    <location>
        <begin position="1"/>
        <end position="873"/>
    </location>
</feature>
<feature type="topological domain" description="Cytoplasmic" evidence="9">
    <location>
        <begin position="1"/>
        <end position="121"/>
    </location>
</feature>
<feature type="transmembrane region" description="Helical; Name=Segment S1" evidence="3">
    <location>
        <begin position="122"/>
        <end position="144"/>
    </location>
</feature>
<feature type="topological domain" description="Extracellular" evidence="9">
    <location>
        <begin position="145"/>
        <end position="154"/>
    </location>
</feature>
<feature type="transmembrane region" description="Helical; Name=Segment S2" evidence="3">
    <location>
        <begin position="155"/>
        <end position="176"/>
    </location>
</feature>
<feature type="topological domain" description="Cytoplasmic" evidence="9">
    <location>
        <begin position="177"/>
        <end position="194"/>
    </location>
</feature>
<feature type="transmembrane region" description="Helical; Name=Segment S3" evidence="3">
    <location>
        <begin position="195"/>
        <end position="214"/>
    </location>
</feature>
<feature type="topological domain" description="Extracellular" evidence="9">
    <location>
        <begin position="215"/>
        <end position="226"/>
    </location>
</feature>
<feature type="transmembrane region" description="Helical; Voltage-sensor; Name=Segment S4" evidence="3">
    <location>
        <begin position="227"/>
        <end position="245"/>
    </location>
</feature>
<feature type="topological domain" description="Cytoplasmic" evidence="9">
    <location>
        <begin position="246"/>
        <end position="257"/>
    </location>
</feature>
<feature type="transmembrane region" description="Helical; Name=Segment S5" evidence="3">
    <location>
        <begin position="258"/>
        <end position="283"/>
    </location>
</feature>
<feature type="topological domain" description="Extracellular" evidence="9">
    <location>
        <begin position="284"/>
        <end position="303"/>
    </location>
</feature>
<feature type="intramembrane region" description="Pore-forming; Name=Segment H5" evidence="3">
    <location>
        <begin position="304"/>
        <end position="316"/>
    </location>
</feature>
<feature type="topological domain" description="Extracellular" evidence="9">
    <location>
        <begin position="317"/>
        <end position="327"/>
    </location>
</feature>
<feature type="transmembrane region" description="Helical; Name=Segment S6" evidence="3">
    <location>
        <begin position="328"/>
        <end position="354"/>
    </location>
</feature>
<feature type="topological domain" description="Cytoplasmic" evidence="9">
    <location>
        <begin position="355"/>
        <end position="873"/>
    </location>
</feature>
<feature type="region of interest" description="Disordered" evidence="6">
    <location>
        <begin position="1"/>
        <end position="41"/>
    </location>
</feature>
<feature type="region of interest" description="Mediates interaction with calmodulin" evidence="2">
    <location>
        <begin position="357"/>
        <end position="538"/>
    </location>
</feature>
<feature type="region of interest" description="Disordered" evidence="6">
    <location>
        <begin position="575"/>
        <end position="603"/>
    </location>
</feature>
<feature type="region of interest" description="Disordered" evidence="6">
    <location>
        <begin position="723"/>
        <end position="742"/>
    </location>
</feature>
<feature type="region of interest" description="Disordered" evidence="6">
    <location>
        <begin position="766"/>
        <end position="873"/>
    </location>
</feature>
<feature type="short sequence motif" description="Selectivity filter" evidence="1">
    <location>
        <begin position="317"/>
        <end position="322"/>
    </location>
</feature>
<feature type="compositionally biased region" description="Gly residues" evidence="6">
    <location>
        <begin position="11"/>
        <end position="26"/>
    </location>
</feature>
<feature type="compositionally biased region" description="Polar residues" evidence="6">
    <location>
        <begin position="588"/>
        <end position="601"/>
    </location>
</feature>
<feature type="compositionally biased region" description="Polar residues" evidence="6">
    <location>
        <begin position="725"/>
        <end position="741"/>
    </location>
</feature>
<feature type="compositionally biased region" description="Polar residues" evidence="6">
    <location>
        <begin position="844"/>
        <end position="873"/>
    </location>
</feature>
<feature type="binding site" evidence="3">
    <location>
        <position position="244"/>
    </location>
    <ligand>
        <name>a 1,2-diacyl-sn-glycero-3-phospho-(1D-myo-inositol-4,5-bisphosphate)</name>
        <dbReference type="ChEBI" id="CHEBI:58456"/>
    </ligand>
</feature>
<feature type="binding site" evidence="3">
    <location>
        <position position="260"/>
    </location>
    <ligand>
        <name>a 1,2-diacyl-sn-glycero-3-phospho-(1D-myo-inositol-4,5-bisphosphate)</name>
        <dbReference type="ChEBI" id="CHEBI:58456"/>
    </ligand>
</feature>
<feature type="binding site" evidence="3">
    <location>
        <position position="367"/>
    </location>
    <ligand>
        <name>a 1,2-diacyl-sn-glycero-3-phospho-(1D-myo-inositol-4,5-bisphosphate)</name>
        <dbReference type="ChEBI" id="CHEBI:58456"/>
    </ligand>
</feature>
<feature type="modified residue" description="Phosphothreonine" evidence="4">
    <location>
        <position position="82"/>
    </location>
</feature>
<feature type="sequence conflict" description="In Ref. 1; AAM81579." evidence="9" ref="1">
    <original>R</original>
    <variation>T</variation>
    <location>
        <position position="7"/>
    </location>
</feature>
<evidence type="ECO:0000250" key="1"/>
<evidence type="ECO:0000250" key="2">
    <source>
        <dbReference type="UniProtKB" id="O43525"/>
    </source>
</evidence>
<evidence type="ECO:0000250" key="3">
    <source>
        <dbReference type="UniProtKB" id="O43526"/>
    </source>
</evidence>
<evidence type="ECO:0000250" key="4">
    <source>
        <dbReference type="UniProtKB" id="O88944"/>
    </source>
</evidence>
<evidence type="ECO:0000255" key="5"/>
<evidence type="ECO:0000256" key="6">
    <source>
        <dbReference type="SAM" id="MobiDB-lite"/>
    </source>
</evidence>
<evidence type="ECO:0000269" key="7">
    <source>
    </source>
</evidence>
<evidence type="ECO:0000269" key="8">
    <source>
    </source>
</evidence>
<evidence type="ECO:0000305" key="9"/>
<evidence type="ECO:0000312" key="10">
    <source>
        <dbReference type="MGI" id="MGI:1336181"/>
    </source>
</evidence>
<reference key="1">
    <citation type="submission" date="2002-06" db="EMBL/GenBank/DDBJ databases">
        <authorList>
            <person name="Isbrandt D."/>
            <person name="Peters H.C."/>
            <person name="Pongs O."/>
        </authorList>
    </citation>
    <scope>NUCLEOTIDE SEQUENCE [MRNA]</scope>
    <source>
        <strain>C57BL/6J</strain>
    </source>
</reference>
<reference key="2">
    <citation type="journal article" date="2009" name="PLoS Biol.">
        <title>Lineage-specific biology revealed by a finished genome assembly of the mouse.</title>
        <authorList>
            <person name="Church D.M."/>
            <person name="Goodstadt L."/>
            <person name="Hillier L.W."/>
            <person name="Zody M.C."/>
            <person name="Goldstein S."/>
            <person name="She X."/>
            <person name="Bult C.J."/>
            <person name="Agarwala R."/>
            <person name="Cherry J.L."/>
            <person name="DiCuccio M."/>
            <person name="Hlavina W."/>
            <person name="Kapustin Y."/>
            <person name="Meric P."/>
            <person name="Maglott D."/>
            <person name="Birtle Z."/>
            <person name="Marques A.C."/>
            <person name="Graves T."/>
            <person name="Zhou S."/>
            <person name="Teague B."/>
            <person name="Potamousis K."/>
            <person name="Churas C."/>
            <person name="Place M."/>
            <person name="Herschleb J."/>
            <person name="Runnheim R."/>
            <person name="Forrest D."/>
            <person name="Amos-Landgraf J."/>
            <person name="Schwartz D.C."/>
            <person name="Cheng Z."/>
            <person name="Lindblad-Toh K."/>
            <person name="Eichler E.E."/>
            <person name="Ponting C.P."/>
        </authorList>
    </citation>
    <scope>NUCLEOTIDE SEQUENCE [LARGE SCALE GENOMIC DNA]</scope>
    <source>
        <strain>C57BL/6J</strain>
    </source>
</reference>
<reference key="3">
    <citation type="journal article" date="2007" name="Mol. Cell. Proteomics">
        <title>Qualitative and quantitative analyses of protein phosphorylation in naive and stimulated mouse synaptosomal preparations.</title>
        <authorList>
            <person name="Munton R.P."/>
            <person name="Tweedie-Cullen R."/>
            <person name="Livingstone-Zatchej M."/>
            <person name="Weinandy F."/>
            <person name="Waidelich M."/>
            <person name="Longo D."/>
            <person name="Gehrig P."/>
            <person name="Potthast F."/>
            <person name="Rutishauser D."/>
            <person name="Gerrits B."/>
            <person name="Panse C."/>
            <person name="Schlapbach R."/>
            <person name="Mansuy I.M."/>
        </authorList>
    </citation>
    <scope>IDENTIFICATION BY MASS SPECTROMETRY [LARGE SCALE ANALYSIS]</scope>
    <source>
        <tissue>Brain cortex</tissue>
    </source>
</reference>
<reference key="4">
    <citation type="journal article" date="2010" name="Cell">
        <title>A tissue-specific atlas of mouse protein phosphorylation and expression.</title>
        <authorList>
            <person name="Huttlin E.L."/>
            <person name="Jedrychowski M.P."/>
            <person name="Elias J.E."/>
            <person name="Goswami T."/>
            <person name="Rad R."/>
            <person name="Beausoleil S.A."/>
            <person name="Villen J."/>
            <person name="Haas W."/>
            <person name="Sowa M.E."/>
            <person name="Gygi S.P."/>
        </authorList>
    </citation>
    <scope>IDENTIFICATION BY MASS SPECTROMETRY [LARGE SCALE ANALYSIS]</scope>
    <source>
        <tissue>Brain</tissue>
    </source>
</reference>
<reference key="5">
    <citation type="journal article" date="2017" name="J. Biol. Chem.">
        <title>Schwannomin-interacting protein 1 isoform IQCJ-SCHIP1 is a multipartner ankyrin- and spectrin-binding protein involved in the organization of nodes of Ranvier.</title>
        <authorList>
            <person name="Martin P.M."/>
            <person name="Cifuentes-Diaz C."/>
            <person name="Devaux J."/>
            <person name="Garcia M."/>
            <person name="Bureau J."/>
            <person name="Thomasseau S."/>
            <person name="Klingler E."/>
            <person name="Girault J.A."/>
            <person name="Goutebroze L."/>
        </authorList>
    </citation>
    <scope>INTERACTION WITH IQCJ-SCHIP1</scope>
</reference>
<reference key="6">
    <citation type="journal article" date="2024" name="Front. Pharmacol.">
        <title>The transmembrane channel-like 6 (TMC6) in primary sensory neurons involving thermal sensation via modulating M channels.</title>
        <authorList>
            <person name="An Y."/>
            <person name="Hu J."/>
            <person name="Hao H."/>
            <person name="Zhao W."/>
            <person name="Zhang X."/>
            <person name="Shao J."/>
            <person name="Wang C."/>
            <person name="Li X."/>
            <person name="Liu C."/>
            <person name="He J."/>
            <person name="Zhao Y."/>
            <person name="Zhang H."/>
            <person name="Du X."/>
        </authorList>
    </citation>
    <scope>TISSUE SPECIFICITY</scope>
</reference>
<accession>Q8K3F6</accession>
<accession>E9QJY5</accession>
<keyword id="KW-1003">Cell membrane</keyword>
<keyword id="KW-0407">Ion channel</keyword>
<keyword id="KW-0406">Ion transport</keyword>
<keyword id="KW-0472">Membrane</keyword>
<keyword id="KW-0597">Phosphoprotein</keyword>
<keyword id="KW-0630">Potassium</keyword>
<keyword id="KW-0631">Potassium channel</keyword>
<keyword id="KW-0633">Potassium transport</keyword>
<keyword id="KW-1185">Reference proteome</keyword>
<keyword id="KW-0812">Transmembrane</keyword>
<keyword id="KW-1133">Transmembrane helix</keyword>
<keyword id="KW-0813">Transport</keyword>
<keyword id="KW-0832">Ubl conjugation</keyword>
<keyword id="KW-0851">Voltage-gated channel</keyword>